<gene>
    <name type="ordered locus">AFE_0358</name>
</gene>
<dbReference type="EMBL" id="CP001219">
    <property type="protein sequence ID" value="ACK80265.1"/>
    <property type="molecule type" value="Genomic_DNA"/>
</dbReference>
<dbReference type="RefSeq" id="WP_012536103.1">
    <property type="nucleotide sequence ID" value="NC_011761.1"/>
</dbReference>
<dbReference type="SMR" id="B7J4A8"/>
<dbReference type="STRING" id="243159.AFE_0358"/>
<dbReference type="PaxDb" id="243159-AFE_0358"/>
<dbReference type="GeneID" id="65279735"/>
<dbReference type="KEGG" id="afr:AFE_0358"/>
<dbReference type="eggNOG" id="COG2003">
    <property type="taxonomic scope" value="Bacteria"/>
</dbReference>
<dbReference type="HOGENOM" id="CLU_073529_0_1_6"/>
<dbReference type="Proteomes" id="UP000001362">
    <property type="component" value="Chromosome"/>
</dbReference>
<dbReference type="GO" id="GO:0046872">
    <property type="term" value="F:metal ion binding"/>
    <property type="evidence" value="ECO:0007669"/>
    <property type="project" value="UniProtKB-KW"/>
</dbReference>
<dbReference type="GO" id="GO:0008237">
    <property type="term" value="F:metallopeptidase activity"/>
    <property type="evidence" value="ECO:0007669"/>
    <property type="project" value="UniProtKB-KW"/>
</dbReference>
<dbReference type="GO" id="GO:0006508">
    <property type="term" value="P:proteolysis"/>
    <property type="evidence" value="ECO:0007669"/>
    <property type="project" value="UniProtKB-KW"/>
</dbReference>
<dbReference type="CDD" id="cd08071">
    <property type="entry name" value="MPN_DUF2466"/>
    <property type="match status" value="1"/>
</dbReference>
<dbReference type="Gene3D" id="3.40.140.10">
    <property type="entry name" value="Cytidine Deaminase, domain 2"/>
    <property type="match status" value="1"/>
</dbReference>
<dbReference type="InterPro" id="IPR037518">
    <property type="entry name" value="MPN"/>
</dbReference>
<dbReference type="InterPro" id="IPR025657">
    <property type="entry name" value="RadC_JAB"/>
</dbReference>
<dbReference type="InterPro" id="IPR010994">
    <property type="entry name" value="RuvA_2-like"/>
</dbReference>
<dbReference type="InterPro" id="IPR001405">
    <property type="entry name" value="UPF0758"/>
</dbReference>
<dbReference type="InterPro" id="IPR020891">
    <property type="entry name" value="UPF0758_CS"/>
</dbReference>
<dbReference type="InterPro" id="IPR046778">
    <property type="entry name" value="UPF0758_N"/>
</dbReference>
<dbReference type="NCBIfam" id="NF000642">
    <property type="entry name" value="PRK00024.1"/>
    <property type="match status" value="1"/>
</dbReference>
<dbReference type="NCBIfam" id="TIGR00608">
    <property type="entry name" value="radc"/>
    <property type="match status" value="1"/>
</dbReference>
<dbReference type="PANTHER" id="PTHR30471">
    <property type="entry name" value="DNA REPAIR PROTEIN RADC"/>
    <property type="match status" value="1"/>
</dbReference>
<dbReference type="PANTHER" id="PTHR30471:SF3">
    <property type="entry name" value="UPF0758 PROTEIN YEES-RELATED"/>
    <property type="match status" value="1"/>
</dbReference>
<dbReference type="Pfam" id="PF04002">
    <property type="entry name" value="RadC"/>
    <property type="match status" value="1"/>
</dbReference>
<dbReference type="Pfam" id="PF20582">
    <property type="entry name" value="UPF0758_N"/>
    <property type="match status" value="1"/>
</dbReference>
<dbReference type="SUPFAM" id="SSF102712">
    <property type="entry name" value="JAB1/MPN domain"/>
    <property type="match status" value="1"/>
</dbReference>
<dbReference type="SUPFAM" id="SSF47781">
    <property type="entry name" value="RuvA domain 2-like"/>
    <property type="match status" value="1"/>
</dbReference>
<dbReference type="PROSITE" id="PS50249">
    <property type="entry name" value="MPN"/>
    <property type="match status" value="1"/>
</dbReference>
<dbReference type="PROSITE" id="PS01302">
    <property type="entry name" value="UPF0758"/>
    <property type="match status" value="1"/>
</dbReference>
<organism>
    <name type="scientific">Acidithiobacillus ferrooxidans (strain ATCC 23270 / DSM 14882 / CIP 104768 / NCIMB 8455)</name>
    <name type="common">Ferrobacillus ferrooxidans (strain ATCC 23270)</name>
    <dbReference type="NCBI Taxonomy" id="243159"/>
    <lineage>
        <taxon>Bacteria</taxon>
        <taxon>Pseudomonadati</taxon>
        <taxon>Pseudomonadota</taxon>
        <taxon>Acidithiobacillia</taxon>
        <taxon>Acidithiobacillales</taxon>
        <taxon>Acidithiobacillaceae</taxon>
        <taxon>Acidithiobacillus</taxon>
    </lineage>
</organism>
<name>Y358_ACIF2</name>
<proteinExistence type="inferred from homology"/>
<protein>
    <recommendedName>
        <fullName>UPF0758 protein AFE_0358</fullName>
    </recommendedName>
</protein>
<accession>B7J4A8</accession>
<reference key="1">
    <citation type="journal article" date="2008" name="BMC Genomics">
        <title>Acidithiobacillus ferrooxidans metabolism: from genome sequence to industrial applications.</title>
        <authorList>
            <person name="Valdes J."/>
            <person name="Pedroso I."/>
            <person name="Quatrini R."/>
            <person name="Dodson R.J."/>
            <person name="Tettelin H."/>
            <person name="Blake R. II"/>
            <person name="Eisen J.A."/>
            <person name="Holmes D.S."/>
        </authorList>
    </citation>
    <scope>NUCLEOTIDE SEQUENCE [LARGE SCALE GENOMIC DNA]</scope>
    <source>
        <strain>ATCC 23270 / DSM 14882 / CIP 104768 / NCIMB 8455</strain>
    </source>
</reference>
<comment type="similarity">
    <text evidence="2">Belongs to the UPF0758 family.</text>
</comment>
<keyword id="KW-0378">Hydrolase</keyword>
<keyword id="KW-0479">Metal-binding</keyword>
<keyword id="KW-0482">Metalloprotease</keyword>
<keyword id="KW-0645">Protease</keyword>
<keyword id="KW-1185">Reference proteome</keyword>
<keyword id="KW-0862">Zinc</keyword>
<feature type="chain" id="PRO_1000195279" description="UPF0758 protein AFE_0358">
    <location>
        <begin position="1"/>
        <end position="224"/>
    </location>
</feature>
<feature type="domain" description="MPN" evidence="1">
    <location>
        <begin position="102"/>
        <end position="224"/>
    </location>
</feature>
<feature type="short sequence motif" description="JAMM motif" evidence="1">
    <location>
        <begin position="173"/>
        <end position="186"/>
    </location>
</feature>
<feature type="binding site" evidence="1">
    <location>
        <position position="173"/>
    </location>
    <ligand>
        <name>Zn(2+)</name>
        <dbReference type="ChEBI" id="CHEBI:29105"/>
        <note>catalytic</note>
    </ligand>
</feature>
<feature type="binding site" evidence="1">
    <location>
        <position position="175"/>
    </location>
    <ligand>
        <name>Zn(2+)</name>
        <dbReference type="ChEBI" id="CHEBI:29105"/>
        <note>catalytic</note>
    </ligand>
</feature>
<feature type="binding site" evidence="1">
    <location>
        <position position="186"/>
    </location>
    <ligand>
        <name>Zn(2+)</name>
        <dbReference type="ChEBI" id="CHEBI:29105"/>
        <note>catalytic</note>
    </ligand>
</feature>
<sequence length="224" mass="25071">MAITDWPVDERPRERLLQKGAATLSDAELLAIFLRVGVVGKSAVDLAREMLLNFGSLRALLTASHHDFCVHKGLGDAKYALLQAVLEMGRRHLAEEWQRGDGLDSPLRVRQYLSATLRDRCREVFAVIFLDNRHRVLRFEEMFLGTIDGATVHIREVLKRALELNAAALIVAHNHPSGVAEPSAADLSLTRRLDQAMQLLDLRLLDHFIVGDGEPLSLREQGGW</sequence>
<evidence type="ECO:0000255" key="1">
    <source>
        <dbReference type="PROSITE-ProRule" id="PRU01182"/>
    </source>
</evidence>
<evidence type="ECO:0000305" key="2"/>